<reference key="1">
    <citation type="journal article" date="2008" name="Genome Res.">
        <title>Chlamydia trachomatis: genome sequence analysis of lymphogranuloma venereum isolates.</title>
        <authorList>
            <person name="Thomson N.R."/>
            <person name="Holden M.T.G."/>
            <person name="Carder C."/>
            <person name="Lennard N."/>
            <person name="Lockey S.J."/>
            <person name="Marsh P."/>
            <person name="Skipp P."/>
            <person name="O'Connor C.D."/>
            <person name="Goodhead I."/>
            <person name="Norbertzcak H."/>
            <person name="Harris B."/>
            <person name="Ormond D."/>
            <person name="Rance R."/>
            <person name="Quail M.A."/>
            <person name="Parkhill J."/>
            <person name="Stephens R.S."/>
            <person name="Clarke I.N."/>
        </authorList>
    </citation>
    <scope>NUCLEOTIDE SEQUENCE [LARGE SCALE GENOMIC DNA]</scope>
    <source>
        <strain>ATCC VR-902B / DSM 19102 / 434/Bu</strain>
    </source>
</reference>
<feature type="chain" id="PRO_1000094486" description="3-dehydroquinate synthase">
    <location>
        <begin position="1"/>
        <end position="373"/>
    </location>
</feature>
<feature type="binding site" evidence="2">
    <location>
        <begin position="67"/>
        <end position="72"/>
    </location>
    <ligand>
        <name>NAD(+)</name>
        <dbReference type="ChEBI" id="CHEBI:57540"/>
    </ligand>
</feature>
<feature type="binding site" evidence="2">
    <location>
        <begin position="101"/>
        <end position="105"/>
    </location>
    <ligand>
        <name>NAD(+)</name>
        <dbReference type="ChEBI" id="CHEBI:57540"/>
    </ligand>
</feature>
<feature type="binding site" evidence="2">
    <location>
        <begin position="125"/>
        <end position="126"/>
    </location>
    <ligand>
        <name>NAD(+)</name>
        <dbReference type="ChEBI" id="CHEBI:57540"/>
    </ligand>
</feature>
<feature type="binding site" evidence="2">
    <location>
        <position position="138"/>
    </location>
    <ligand>
        <name>NAD(+)</name>
        <dbReference type="ChEBI" id="CHEBI:57540"/>
    </ligand>
</feature>
<feature type="binding site" evidence="3">
    <location>
        <position position="147"/>
    </location>
    <ligand>
        <name>NAD(+)</name>
        <dbReference type="ChEBI" id="CHEBI:57540"/>
    </ligand>
</feature>
<feature type="binding site" evidence="2">
    <location>
        <position position="180"/>
    </location>
    <ligand>
        <name>Zn(2+)</name>
        <dbReference type="ChEBI" id="CHEBI:29105"/>
    </ligand>
</feature>
<feature type="binding site" evidence="2">
    <location>
        <position position="240"/>
    </location>
    <ligand>
        <name>Zn(2+)</name>
        <dbReference type="ChEBI" id="CHEBI:29105"/>
    </ligand>
</feature>
<feature type="binding site" evidence="2">
    <location>
        <position position="256"/>
    </location>
    <ligand>
        <name>Zn(2+)</name>
        <dbReference type="ChEBI" id="CHEBI:29105"/>
    </ligand>
</feature>
<accession>B0B7T8</accession>
<name>AROB_CHLT2</name>
<organism>
    <name type="scientific">Chlamydia trachomatis serovar L2 (strain ATCC VR-902B / DSM 19102 / 434/Bu)</name>
    <dbReference type="NCBI Taxonomy" id="471472"/>
    <lineage>
        <taxon>Bacteria</taxon>
        <taxon>Pseudomonadati</taxon>
        <taxon>Chlamydiota</taxon>
        <taxon>Chlamydiia</taxon>
        <taxon>Chlamydiales</taxon>
        <taxon>Chlamydiaceae</taxon>
        <taxon>Chlamydia/Chlamydophila group</taxon>
        <taxon>Chlamydia</taxon>
    </lineage>
</organism>
<comment type="function">
    <text evidence="1">Catalyzes the conversion of 3-deoxy-D-arabino-heptulosonate 7-phosphate (DAHP) to dehydroquinate (DHQ).</text>
</comment>
<comment type="catalytic activity">
    <reaction evidence="1">
        <text>7-phospho-2-dehydro-3-deoxy-D-arabino-heptonate = 3-dehydroquinate + phosphate</text>
        <dbReference type="Rhea" id="RHEA:21968"/>
        <dbReference type="ChEBI" id="CHEBI:32364"/>
        <dbReference type="ChEBI" id="CHEBI:43474"/>
        <dbReference type="ChEBI" id="CHEBI:58394"/>
        <dbReference type="EC" id="4.2.3.4"/>
    </reaction>
</comment>
<comment type="cofactor">
    <cofactor evidence="1">
        <name>NAD(+)</name>
        <dbReference type="ChEBI" id="CHEBI:57540"/>
    </cofactor>
</comment>
<comment type="cofactor">
    <cofactor evidence="1">
        <name>Co(2+)</name>
        <dbReference type="ChEBI" id="CHEBI:48828"/>
    </cofactor>
    <cofactor evidence="1">
        <name>Zn(2+)</name>
        <dbReference type="ChEBI" id="CHEBI:29105"/>
    </cofactor>
    <text evidence="1">Binds 1 divalent metal cation per subunit. Can use either Co(2+) or Zn(2+).</text>
</comment>
<comment type="pathway">
    <text evidence="1">Metabolic intermediate biosynthesis; chorismate biosynthesis; chorismate from D-erythrose 4-phosphate and phosphoenolpyruvate: step 2/7.</text>
</comment>
<comment type="subcellular location">
    <subcellularLocation>
        <location evidence="1">Cytoplasm</location>
    </subcellularLocation>
</comment>
<comment type="similarity">
    <text evidence="4">Belongs to the sugar phosphate cyclases superfamily. Dehydroquinate synthase family.</text>
</comment>
<protein>
    <recommendedName>
        <fullName evidence="1">3-dehydroquinate synthase</fullName>
        <shortName evidence="1">DHQS</shortName>
        <ecNumber evidence="1">4.2.3.4</ecNumber>
    </recommendedName>
</protein>
<sequence length="373" mass="41183">MIELVTDSPHPIHLVDSLQNPKLFASLSTDFPLIFITNTKLNTLILPPLLDLARSLGFSVETLTIPEGEETKTGDTFLSLHQQLTDLNVPRQATLIGVGGGVILDIAGFVAATHCRGMPFIAIPTTLVAMIDASIGGKNGINLNHIKNRIGSFYLPKAVWICPRKLSFLPQQELHHGIAECIKHAYIADSAILPLLQDPNALKKEDKLSLLIKKNCLCKASVVQQDVRDYAKRQILNFGHTLGHALEMLFIGKIPHSCAISVGMVLETKLSLSLGVARSPAILHSLIQDLLRYQLPVSLKDLYMRAQIPPHNCDQILSALTYDKKKQNTPLPPFVMIEEIGLAASFDGRFCQTISKHILTKVLEEEFYAMHNN</sequence>
<gene>
    <name evidence="1" type="primary">aroB</name>
    <name type="ordered locus">CTL0623</name>
</gene>
<proteinExistence type="inferred from homology"/>
<evidence type="ECO:0000250" key="1">
    <source>
        <dbReference type="UniProtKB" id="P07639"/>
    </source>
</evidence>
<evidence type="ECO:0000250" key="2">
    <source>
        <dbReference type="UniProtKB" id="P9WPX9"/>
    </source>
</evidence>
<evidence type="ECO:0000250" key="3">
    <source>
        <dbReference type="UniProtKB" id="Q6GGU4"/>
    </source>
</evidence>
<evidence type="ECO:0000305" key="4"/>
<dbReference type="EC" id="4.2.3.4" evidence="1"/>
<dbReference type="EMBL" id="AM884176">
    <property type="protein sequence ID" value="CAP04064.1"/>
    <property type="molecule type" value="Genomic_DNA"/>
</dbReference>
<dbReference type="RefSeq" id="WP_009873761.1">
    <property type="nucleotide sequence ID" value="NC_010287.1"/>
</dbReference>
<dbReference type="RefSeq" id="YP_001654698.1">
    <property type="nucleotide sequence ID" value="NC_010287.1"/>
</dbReference>
<dbReference type="SMR" id="B0B7T8"/>
<dbReference type="KEGG" id="ctb:CTL0623"/>
<dbReference type="PATRIC" id="fig|471472.4.peg.672"/>
<dbReference type="HOGENOM" id="CLU_001201_0_1_0"/>
<dbReference type="UniPathway" id="UPA00053">
    <property type="reaction ID" value="UER00085"/>
</dbReference>
<dbReference type="Proteomes" id="UP001154402">
    <property type="component" value="Chromosome"/>
</dbReference>
<dbReference type="GO" id="GO:0005737">
    <property type="term" value="C:cytoplasm"/>
    <property type="evidence" value="ECO:0007669"/>
    <property type="project" value="UniProtKB-SubCell"/>
</dbReference>
<dbReference type="GO" id="GO:0003856">
    <property type="term" value="F:3-dehydroquinate synthase activity"/>
    <property type="evidence" value="ECO:0007669"/>
    <property type="project" value="UniProtKB-EC"/>
</dbReference>
<dbReference type="GO" id="GO:0046872">
    <property type="term" value="F:metal ion binding"/>
    <property type="evidence" value="ECO:0007669"/>
    <property type="project" value="UniProtKB-KW"/>
</dbReference>
<dbReference type="GO" id="GO:0000166">
    <property type="term" value="F:nucleotide binding"/>
    <property type="evidence" value="ECO:0007669"/>
    <property type="project" value="UniProtKB-KW"/>
</dbReference>
<dbReference type="GO" id="GO:0008652">
    <property type="term" value="P:amino acid biosynthetic process"/>
    <property type="evidence" value="ECO:0007669"/>
    <property type="project" value="UniProtKB-KW"/>
</dbReference>
<dbReference type="GO" id="GO:0009073">
    <property type="term" value="P:aromatic amino acid family biosynthetic process"/>
    <property type="evidence" value="ECO:0007669"/>
    <property type="project" value="UniProtKB-KW"/>
</dbReference>
<dbReference type="GO" id="GO:0009423">
    <property type="term" value="P:chorismate biosynthetic process"/>
    <property type="evidence" value="ECO:0007669"/>
    <property type="project" value="UniProtKB-UniPathway"/>
</dbReference>
<dbReference type="CDD" id="cd08195">
    <property type="entry name" value="DHQS"/>
    <property type="match status" value="1"/>
</dbReference>
<dbReference type="FunFam" id="3.40.50.1970:FF:000007">
    <property type="entry name" value="Pentafunctional AROM polypeptide"/>
    <property type="match status" value="1"/>
</dbReference>
<dbReference type="Gene3D" id="3.40.50.1970">
    <property type="match status" value="1"/>
</dbReference>
<dbReference type="Gene3D" id="1.20.1090.10">
    <property type="entry name" value="Dehydroquinate synthase-like - alpha domain"/>
    <property type="match status" value="1"/>
</dbReference>
<dbReference type="InterPro" id="IPR050071">
    <property type="entry name" value="Dehydroquinate_synthase"/>
</dbReference>
<dbReference type="InterPro" id="IPR016037">
    <property type="entry name" value="DHQ_synth_AroB"/>
</dbReference>
<dbReference type="InterPro" id="IPR030963">
    <property type="entry name" value="DHQ_synth_fam"/>
</dbReference>
<dbReference type="InterPro" id="IPR030960">
    <property type="entry name" value="DHQS/DOIS_N"/>
</dbReference>
<dbReference type="InterPro" id="IPR056179">
    <property type="entry name" value="DHQS_C"/>
</dbReference>
<dbReference type="NCBIfam" id="TIGR01357">
    <property type="entry name" value="aroB"/>
    <property type="match status" value="1"/>
</dbReference>
<dbReference type="PANTHER" id="PTHR43622">
    <property type="entry name" value="3-DEHYDROQUINATE SYNTHASE"/>
    <property type="match status" value="1"/>
</dbReference>
<dbReference type="PANTHER" id="PTHR43622:SF7">
    <property type="entry name" value="3-DEHYDROQUINATE SYNTHASE, CHLOROPLASTIC"/>
    <property type="match status" value="1"/>
</dbReference>
<dbReference type="Pfam" id="PF01761">
    <property type="entry name" value="DHQ_synthase"/>
    <property type="match status" value="1"/>
</dbReference>
<dbReference type="Pfam" id="PF24621">
    <property type="entry name" value="DHQS_C"/>
    <property type="match status" value="1"/>
</dbReference>
<dbReference type="PIRSF" id="PIRSF001455">
    <property type="entry name" value="DHQ_synth"/>
    <property type="match status" value="1"/>
</dbReference>
<dbReference type="SUPFAM" id="SSF56796">
    <property type="entry name" value="Dehydroquinate synthase-like"/>
    <property type="match status" value="1"/>
</dbReference>
<keyword id="KW-0028">Amino-acid biosynthesis</keyword>
<keyword id="KW-0057">Aromatic amino acid biosynthesis</keyword>
<keyword id="KW-0170">Cobalt</keyword>
<keyword id="KW-0963">Cytoplasm</keyword>
<keyword id="KW-0456">Lyase</keyword>
<keyword id="KW-0479">Metal-binding</keyword>
<keyword id="KW-0520">NAD</keyword>
<keyword id="KW-0547">Nucleotide-binding</keyword>
<keyword id="KW-0862">Zinc</keyword>